<name>CICC_EMENI</name>
<keyword id="KW-0274">FAD</keyword>
<keyword id="KW-0285">Flavoprotein</keyword>
<keyword id="KW-0325">Glycoprotein</keyword>
<keyword id="KW-0560">Oxidoreductase</keyword>
<keyword id="KW-1185">Reference proteome</keyword>
<keyword id="KW-0732">Signal</keyword>
<evidence type="ECO:0000250" key="1">
    <source>
        <dbReference type="UniProtKB" id="E4QP00"/>
    </source>
</evidence>
<evidence type="ECO:0000255" key="2"/>
<evidence type="ECO:0000255" key="3">
    <source>
        <dbReference type="PROSITE-ProRule" id="PRU00498"/>
    </source>
</evidence>
<evidence type="ECO:0000269" key="4">
    <source>
    </source>
</evidence>
<evidence type="ECO:0000269" key="5">
    <source>
    </source>
</evidence>
<evidence type="ECO:0000269" key="6">
    <source>
    </source>
</evidence>
<evidence type="ECO:0000303" key="7">
    <source>
    </source>
</evidence>
<evidence type="ECO:0000305" key="8"/>
<evidence type="ECO:0000305" key="9">
    <source>
    </source>
</evidence>
<comment type="function">
    <text evidence="4 5 9">Oxidoreductase; part of the gene cluster that mediates the biosynthesis of cichorine, a phytotoxin active against knapweed, corn, and soybeans (PubMed:24244835). The first step in the pathway is performed by the non-reducing polyketide synthase pkbA that condenses one acetyl-CoA starter unit with 3 malonyl-CoA units (PubMed:22510154). PkbA also catalyzes one methylation step to produce 3-methylorsellinate (PubMed:22510154). The nonribosomal peptide synthase-like protein cicB, the cytochrome P450 monooxygenase cicH and the O-methyltransferase cicE are involved in the conversion of 3-methylorsellinate into nidulol (PubMed:24244835). CicB converts 3-methylorsellinate to a yet unidentified intermediate, cicH may play a ring-closing role for cichorine and cicE is plausibly responsible for the methylation of one of the phenol groups (Probable). The oxidoreductase cicC acts downstream with still unidentified enzymes to further convert nidulol into cichorine (PubMed:24244835).</text>
</comment>
<comment type="cofactor">
    <cofactor evidence="1">
        <name>FAD</name>
        <dbReference type="ChEBI" id="CHEBI:57692"/>
    </cofactor>
</comment>
<comment type="pathway">
    <text evidence="5">Phytotoxin biosynthesis.</text>
</comment>
<comment type="disruption phenotype">
    <text evidence="5">Abolishes the production of cichorine and accumulates nidulol.</text>
</comment>
<comment type="biotechnology">
    <text evidence="6">Cichorine and its derivatives are promising in the course of developing novel herbicides.</text>
</comment>
<comment type="similarity">
    <text evidence="8">Belongs to the GMC oxidoreductase family.</text>
</comment>
<organism>
    <name type="scientific">Emericella nidulans (strain FGSC A4 / ATCC 38163 / CBS 112.46 / NRRL 194 / M139)</name>
    <name type="common">Aspergillus nidulans</name>
    <dbReference type="NCBI Taxonomy" id="227321"/>
    <lineage>
        <taxon>Eukaryota</taxon>
        <taxon>Fungi</taxon>
        <taxon>Dikarya</taxon>
        <taxon>Ascomycota</taxon>
        <taxon>Pezizomycotina</taxon>
        <taxon>Eurotiomycetes</taxon>
        <taxon>Eurotiomycetidae</taxon>
        <taxon>Eurotiales</taxon>
        <taxon>Aspergillaceae</taxon>
        <taxon>Aspergillus</taxon>
        <taxon>Aspergillus subgen. Nidulantes</taxon>
    </lineage>
</organism>
<gene>
    <name evidence="7" type="primary">cicC</name>
    <name type="ORF">AN6445</name>
    <name type="ORF">ANIA_06445</name>
</gene>
<accession>A0A1U8QYA8</accession>
<accession>C8V0D9</accession>
<accession>Q5AZ35</accession>
<dbReference type="EC" id="1.1.-.-" evidence="9"/>
<dbReference type="EMBL" id="BN001301">
    <property type="protein sequence ID" value="CBF69458.1"/>
    <property type="molecule type" value="Genomic_DNA"/>
</dbReference>
<dbReference type="EMBL" id="AACD01000108">
    <property type="protein sequence ID" value="EAA58467.1"/>
    <property type="molecule type" value="Genomic_DNA"/>
</dbReference>
<dbReference type="RefSeq" id="XP_664049.1">
    <property type="nucleotide sequence ID" value="XM_658957.1"/>
</dbReference>
<dbReference type="SMR" id="A0A1U8QYA8"/>
<dbReference type="STRING" id="227321.Q5AZ35"/>
<dbReference type="CAZy" id="AA3">
    <property type="family name" value="Auxiliary Activities 3"/>
</dbReference>
<dbReference type="GlyCosmos" id="A0A1U8QYA8">
    <property type="glycosylation" value="5 sites, No reported glycans"/>
</dbReference>
<dbReference type="EnsemblFungi" id="CBF69458">
    <property type="protein sequence ID" value="CBF69458"/>
    <property type="gene ID" value="ANIA_06445"/>
</dbReference>
<dbReference type="GeneID" id="2871342"/>
<dbReference type="KEGG" id="ani:ANIA_06445"/>
<dbReference type="VEuPathDB" id="FungiDB:AN6445"/>
<dbReference type="eggNOG" id="KOG1238">
    <property type="taxonomic scope" value="Eukaryota"/>
</dbReference>
<dbReference type="HOGENOM" id="CLU_002865_6_3_1"/>
<dbReference type="InParanoid" id="A0A1U8QYA8"/>
<dbReference type="OMA" id="DYSECVM"/>
<dbReference type="OrthoDB" id="269227at2759"/>
<dbReference type="Proteomes" id="UP000000560">
    <property type="component" value="Chromosome I"/>
</dbReference>
<dbReference type="GO" id="GO:0050660">
    <property type="term" value="F:flavin adenine dinucleotide binding"/>
    <property type="evidence" value="ECO:0007669"/>
    <property type="project" value="InterPro"/>
</dbReference>
<dbReference type="GO" id="GO:0016491">
    <property type="term" value="F:oxidoreductase activity"/>
    <property type="evidence" value="ECO:0000318"/>
    <property type="project" value="GO_Central"/>
</dbReference>
<dbReference type="GO" id="GO:0016614">
    <property type="term" value="F:oxidoreductase activity, acting on CH-OH group of donors"/>
    <property type="evidence" value="ECO:0007669"/>
    <property type="project" value="InterPro"/>
</dbReference>
<dbReference type="GO" id="GO:0062032">
    <property type="term" value="P:cichorine biosynthetic process"/>
    <property type="evidence" value="ECO:0000315"/>
    <property type="project" value="GO_Central"/>
</dbReference>
<dbReference type="GO" id="GO:0044550">
    <property type="term" value="P:secondary metabolite biosynthetic process"/>
    <property type="evidence" value="ECO:0000318"/>
    <property type="project" value="GO_Central"/>
</dbReference>
<dbReference type="Gene3D" id="3.50.50.60">
    <property type="entry name" value="FAD/NAD(P)-binding domain"/>
    <property type="match status" value="1"/>
</dbReference>
<dbReference type="Gene3D" id="3.30.560.10">
    <property type="entry name" value="Glucose Oxidase, domain 3"/>
    <property type="match status" value="1"/>
</dbReference>
<dbReference type="InterPro" id="IPR036188">
    <property type="entry name" value="FAD/NAD-bd_sf"/>
</dbReference>
<dbReference type="InterPro" id="IPR012132">
    <property type="entry name" value="GMC_OxRdtase"/>
</dbReference>
<dbReference type="InterPro" id="IPR000172">
    <property type="entry name" value="GMC_OxRdtase_N"/>
</dbReference>
<dbReference type="InterPro" id="IPR007867">
    <property type="entry name" value="GMC_OxRtase_C"/>
</dbReference>
<dbReference type="PANTHER" id="PTHR11552:SF138">
    <property type="entry name" value="DEHYDROGENASE PKFF-RELATED"/>
    <property type="match status" value="1"/>
</dbReference>
<dbReference type="PANTHER" id="PTHR11552">
    <property type="entry name" value="GLUCOSE-METHANOL-CHOLINE GMC OXIDOREDUCTASE"/>
    <property type="match status" value="1"/>
</dbReference>
<dbReference type="Pfam" id="PF05199">
    <property type="entry name" value="GMC_oxred_C"/>
    <property type="match status" value="1"/>
</dbReference>
<dbReference type="Pfam" id="PF00732">
    <property type="entry name" value="GMC_oxred_N"/>
    <property type="match status" value="1"/>
</dbReference>
<dbReference type="PIRSF" id="PIRSF000137">
    <property type="entry name" value="Alcohol_oxidase"/>
    <property type="match status" value="1"/>
</dbReference>
<dbReference type="SUPFAM" id="SSF54373">
    <property type="entry name" value="FAD-linked reductases, C-terminal domain"/>
    <property type="match status" value="1"/>
</dbReference>
<dbReference type="SUPFAM" id="SSF51905">
    <property type="entry name" value="FAD/NAD(P)-binding domain"/>
    <property type="match status" value="1"/>
</dbReference>
<dbReference type="PROSITE" id="PS00624">
    <property type="entry name" value="GMC_OXRED_2"/>
    <property type="match status" value="1"/>
</dbReference>
<sequence>MALRYLNKFSLLSLAVPTLAAPIGSSFGVPGTDALYDYVVVGAGNAGAPVAYRLAETGHTVALVEAGSLYEYGNGNLSQIPANSLFFIGKDPEWTNNLVDWNFVTSPQAEWNNASVHYASGKVLGGSTGRNLMTYHLPTKGSLDRWAEDVSDESWNFDNMLPYIMKSQRFTPPNNNLRFRNATPTYDPAVLGRRGRLDVTYPNYANGLASWLVRGFRDIGLAAIRGLNGGQLIGSAYTLSTIQPGNQHRASSKTAYLDPLIGRNLNLIIYQSTHAKRILFSNDTVATGVRVSSEGQEYTLSARNEVIVSAGAFKTPQLLMVSGIGPAANLERYGIPLVADRPGVGQNLQDHTLAGPSYRVNAITGSSNSIPEFITEAQRQYNSNPPRGVLTNTGVDILGWEKVPEQLRGNFSTETEDALASLPEDWPELEYLPVYGYFGDQNNYMVTPNDGFNYLTIAAAVVSPLSRGTVDIASNDTEVNPIIDPRWFAHPGDIQVAVAGFRRSRALMASPAMAGITLGGESYPGTDVQTDDEIVEWLREASNTVHHACCTAGMGPRDNPDSVVDTQGRVIGVSGLRIVDASIMPFLPPGHPISIIYGLAERIAESILADA</sequence>
<reference key="1">
    <citation type="journal article" date="2005" name="Nature">
        <title>Sequencing of Aspergillus nidulans and comparative analysis with A. fumigatus and A. oryzae.</title>
        <authorList>
            <person name="Galagan J.E."/>
            <person name="Calvo S.E."/>
            <person name="Cuomo C."/>
            <person name="Ma L.-J."/>
            <person name="Wortman J.R."/>
            <person name="Batzoglou S."/>
            <person name="Lee S.-I."/>
            <person name="Bastuerkmen M."/>
            <person name="Spevak C.C."/>
            <person name="Clutterbuck J."/>
            <person name="Kapitonov V."/>
            <person name="Jurka J."/>
            <person name="Scazzocchio C."/>
            <person name="Farman M.L."/>
            <person name="Butler J."/>
            <person name="Purcell S."/>
            <person name="Harris S."/>
            <person name="Braus G.H."/>
            <person name="Draht O."/>
            <person name="Busch S."/>
            <person name="D'Enfert C."/>
            <person name="Bouchier C."/>
            <person name="Goldman G.H."/>
            <person name="Bell-Pedersen D."/>
            <person name="Griffiths-Jones S."/>
            <person name="Doonan J.H."/>
            <person name="Yu J."/>
            <person name="Vienken K."/>
            <person name="Pain A."/>
            <person name="Freitag M."/>
            <person name="Selker E.U."/>
            <person name="Archer D.B."/>
            <person name="Penalva M.A."/>
            <person name="Oakley B.R."/>
            <person name="Momany M."/>
            <person name="Tanaka T."/>
            <person name="Kumagai T."/>
            <person name="Asai K."/>
            <person name="Machida M."/>
            <person name="Nierman W.C."/>
            <person name="Denning D.W."/>
            <person name="Caddick M.X."/>
            <person name="Hynes M."/>
            <person name="Paoletti M."/>
            <person name="Fischer R."/>
            <person name="Miller B.L."/>
            <person name="Dyer P.S."/>
            <person name="Sachs M.S."/>
            <person name="Osmani S.A."/>
            <person name="Birren B.W."/>
        </authorList>
    </citation>
    <scope>NUCLEOTIDE SEQUENCE [LARGE SCALE GENOMIC DNA]</scope>
    <source>
        <strain>FGSC A4 / ATCC 38163 / CBS 112.46 / NRRL 194 / M139</strain>
    </source>
</reference>
<reference key="2">
    <citation type="journal article" date="2009" name="Fungal Genet. Biol.">
        <title>The 2008 update of the Aspergillus nidulans genome annotation: a community effort.</title>
        <authorList>
            <person name="Wortman J.R."/>
            <person name="Gilsenan J.M."/>
            <person name="Joardar V."/>
            <person name="Deegan J."/>
            <person name="Clutterbuck J."/>
            <person name="Andersen M.R."/>
            <person name="Archer D."/>
            <person name="Bencina M."/>
            <person name="Braus G."/>
            <person name="Coutinho P."/>
            <person name="von Dohren H."/>
            <person name="Doonan J."/>
            <person name="Driessen A.J."/>
            <person name="Durek P."/>
            <person name="Espeso E."/>
            <person name="Fekete E."/>
            <person name="Flipphi M."/>
            <person name="Estrada C.G."/>
            <person name="Geysens S."/>
            <person name="Goldman G."/>
            <person name="de Groot P.W."/>
            <person name="Hansen K."/>
            <person name="Harris S.D."/>
            <person name="Heinekamp T."/>
            <person name="Helmstaedt K."/>
            <person name="Henrissat B."/>
            <person name="Hofmann G."/>
            <person name="Homan T."/>
            <person name="Horio T."/>
            <person name="Horiuchi H."/>
            <person name="James S."/>
            <person name="Jones M."/>
            <person name="Karaffa L."/>
            <person name="Karanyi Z."/>
            <person name="Kato M."/>
            <person name="Keller N."/>
            <person name="Kelly D.E."/>
            <person name="Kiel J.A."/>
            <person name="Kim J.M."/>
            <person name="van der Klei I.J."/>
            <person name="Klis F.M."/>
            <person name="Kovalchuk A."/>
            <person name="Krasevec N."/>
            <person name="Kubicek C.P."/>
            <person name="Liu B."/>
            <person name="Maccabe A."/>
            <person name="Meyer V."/>
            <person name="Mirabito P."/>
            <person name="Miskei M."/>
            <person name="Mos M."/>
            <person name="Mullins J."/>
            <person name="Nelson D.R."/>
            <person name="Nielsen J."/>
            <person name="Oakley B.R."/>
            <person name="Osmani S.A."/>
            <person name="Pakula T."/>
            <person name="Paszewski A."/>
            <person name="Paulsen I."/>
            <person name="Pilsyk S."/>
            <person name="Pocsi I."/>
            <person name="Punt P.J."/>
            <person name="Ram A.F."/>
            <person name="Ren Q."/>
            <person name="Robellet X."/>
            <person name="Robson G."/>
            <person name="Seiboth B."/>
            <person name="van Solingen P."/>
            <person name="Specht T."/>
            <person name="Sun J."/>
            <person name="Taheri-Talesh N."/>
            <person name="Takeshita N."/>
            <person name="Ussery D."/>
            <person name="vanKuyk P.A."/>
            <person name="Visser H."/>
            <person name="van de Vondervoort P.J."/>
            <person name="de Vries R.P."/>
            <person name="Walton J."/>
            <person name="Xiang X."/>
            <person name="Xiong Y."/>
            <person name="Zeng A.P."/>
            <person name="Brandt B.W."/>
            <person name="Cornell M.J."/>
            <person name="van den Hondel C.A."/>
            <person name="Visser J."/>
            <person name="Oliver S.G."/>
            <person name="Turner G."/>
        </authorList>
    </citation>
    <scope>GENOME REANNOTATION</scope>
    <source>
        <strain>FGSC A4 / ATCC 38163 / CBS 112.46 / NRRL 194 / M139</strain>
    </source>
</reference>
<reference key="3">
    <citation type="journal article" date="2012" name="J. Am. Chem. Soc.">
        <title>Illuminating the diversity of aromatic polyketide synthases in Aspergillus nidulans.</title>
        <authorList>
            <person name="Ahuja M."/>
            <person name="Chiang Y.M."/>
            <person name="Chang S.L."/>
            <person name="Praseuth M.B."/>
            <person name="Entwistle R."/>
            <person name="Sanchez J.F."/>
            <person name="Lo H.C."/>
            <person name="Yeh H.H."/>
            <person name="Oakley B.R."/>
            <person name="Wang C.C."/>
        </authorList>
    </citation>
    <scope>FUNCTION</scope>
</reference>
<reference key="4">
    <citation type="journal article" date="2012" name="Med. Chem. Commun.">
        <title>Identification and molecular genetic analysis of the cichorine gene cluster in Aspergillus nidulans.</title>
        <authorList>
            <person name="Sanchez J.F."/>
            <person name="Entwistle R."/>
            <person name="Corcoran D."/>
            <person name="Oakley B.R."/>
            <person name="Wang C.C."/>
        </authorList>
    </citation>
    <scope>FUNCTION</scope>
    <scope>DISRUPTION PHENOTYPE</scope>
    <scope>PATHWAY</scope>
</reference>
<reference key="5">
    <citation type="journal article" date="2019" name="Molecules">
        <title>Discovery of three new phytotoxins from the fungus Aspergillus nidulans by pathway inactivation.</title>
        <authorList>
            <person name="Liao L."/>
            <person name="Zhang X."/>
            <person name="Lou Y."/>
            <person name="Zhou C."/>
            <person name="Yuan Q."/>
            <person name="Gao J."/>
        </authorList>
    </citation>
    <scope>BIOTECHNOLOGY</scope>
</reference>
<protein>
    <recommendedName>
        <fullName evidence="7">Oxidoreductase cicC</fullName>
        <ecNumber evidence="9">1.1.-.-</ecNumber>
    </recommendedName>
    <alternativeName>
        <fullName evidence="7">Cichorine biosynthesis cluster protein C</fullName>
    </alternativeName>
</protein>
<proteinExistence type="evidence at protein level"/>
<feature type="signal peptide" evidence="2">
    <location>
        <begin position="1"/>
        <end position="20"/>
    </location>
</feature>
<feature type="chain" id="PRO_5010519013" description="Oxidoreductase cicC" evidence="2">
    <location>
        <begin position="21"/>
        <end position="611"/>
    </location>
</feature>
<feature type="active site" description="Proton acceptor" evidence="1">
    <location>
        <position position="547"/>
    </location>
</feature>
<feature type="active site" description="Proton donor" evidence="1">
    <location>
        <position position="547"/>
    </location>
</feature>
<feature type="active site" description="Proton acceptor" evidence="1">
    <location>
        <position position="591"/>
    </location>
</feature>
<feature type="binding site" evidence="1">
    <location>
        <begin position="45"/>
        <end position="46"/>
    </location>
    <ligand>
        <name>FAD</name>
        <dbReference type="ChEBI" id="CHEBI:57692"/>
    </ligand>
</feature>
<feature type="binding site" evidence="1">
    <location>
        <begin position="65"/>
        <end position="66"/>
    </location>
    <ligand>
        <name>FAD</name>
        <dbReference type="ChEBI" id="CHEBI:57692"/>
    </ligand>
</feature>
<feature type="binding site" evidence="1">
    <location>
        <position position="123"/>
    </location>
    <ligand>
        <name>FAD</name>
        <dbReference type="ChEBI" id="CHEBI:57692"/>
    </ligand>
</feature>
<feature type="binding site" evidence="1">
    <location>
        <begin position="131"/>
        <end position="134"/>
    </location>
    <ligand>
        <name>FAD</name>
        <dbReference type="ChEBI" id="CHEBI:57692"/>
    </ligand>
</feature>
<feature type="binding site" evidence="1">
    <location>
        <position position="581"/>
    </location>
    <ligand>
        <name>FAD</name>
        <dbReference type="ChEBI" id="CHEBI:57692"/>
    </ligand>
</feature>
<feature type="binding site" evidence="1">
    <location>
        <begin position="592"/>
        <end position="593"/>
    </location>
    <ligand>
        <name>FAD</name>
        <dbReference type="ChEBI" id="CHEBI:57692"/>
    </ligand>
</feature>
<feature type="glycosylation site" description="N-linked (GlcNAc...) asparagine" evidence="3">
    <location>
        <position position="76"/>
    </location>
</feature>
<feature type="glycosylation site" description="N-linked (GlcNAc...) asparagine" evidence="3">
    <location>
        <position position="113"/>
    </location>
</feature>
<feature type="glycosylation site" description="N-linked (GlcNAc...) asparagine" evidence="3">
    <location>
        <position position="282"/>
    </location>
</feature>
<feature type="glycosylation site" description="N-linked (GlcNAc...) asparagine" evidence="3">
    <location>
        <position position="410"/>
    </location>
</feature>
<feature type="glycosylation site" description="N-linked (GlcNAc...) asparagine" evidence="3">
    <location>
        <position position="475"/>
    </location>
</feature>